<comment type="function">
    <text evidence="1">Has antibacterial activity.</text>
</comment>
<comment type="subcellular location">
    <subcellularLocation>
        <location evidence="1">Secreted</location>
    </subcellularLocation>
</comment>
<comment type="tissue specificity">
    <text>Expressed by the venom gland.</text>
</comment>
<comment type="PTM">
    <text evidence="3">Contains 5 disulfide bonds.</text>
</comment>
<comment type="similarity">
    <text evidence="3">Belongs to the venom protein 11 family. 01 (wap-1) subfamily.</text>
</comment>
<name>TXF09_LYCSI</name>
<evidence type="ECO:0000250" key="1"/>
<evidence type="ECO:0000255" key="2"/>
<evidence type="ECO:0000305" key="3"/>
<reference key="1">
    <citation type="journal article" date="2010" name="Zoology">
        <title>Transcriptome analysis of the venom glands of the Chinese wolf spider Lycosa singoriensis.</title>
        <authorList>
            <person name="Zhang Y."/>
            <person name="Chen J."/>
            <person name="Tang X."/>
            <person name="Wang F."/>
            <person name="Jiang L."/>
            <person name="Xiong X."/>
            <person name="Wang M."/>
            <person name="Rong M."/>
            <person name="Liu Z."/>
            <person name="Liang S."/>
        </authorList>
    </citation>
    <scope>NUCLEOTIDE SEQUENCE [LARGE SCALE MRNA]</scope>
    <source>
        <tissue>Venom gland</tissue>
    </source>
</reference>
<accession>B6DD42</accession>
<feature type="signal peptide" evidence="2">
    <location>
        <begin position="1"/>
        <end position="20"/>
    </location>
</feature>
<feature type="chain" id="PRO_0000401885" description="U15-lycotoxin-Ls1d">
    <location>
        <begin position="21"/>
        <end position="86"/>
    </location>
</feature>
<feature type="domain" description="WAP">
    <location>
        <begin position="21"/>
        <end position="66"/>
    </location>
</feature>
<feature type="disulfide bond" evidence="1">
    <location>
        <begin position="24"/>
        <end position="54"/>
    </location>
</feature>
<feature type="disulfide bond" evidence="1">
    <location>
        <begin position="32"/>
        <end position="58"/>
    </location>
</feature>
<feature type="disulfide bond" evidence="1">
    <location>
        <begin position="41"/>
        <end position="53"/>
    </location>
</feature>
<feature type="disulfide bond" evidence="3">
    <location>
        <begin position="42"/>
        <end position="80"/>
    </location>
</feature>
<feature type="disulfide bond" evidence="1">
    <location>
        <begin position="47"/>
        <end position="62"/>
    </location>
</feature>
<organism>
    <name type="scientific">Lycosa singoriensis</name>
    <name type="common">Wolf spider</name>
    <name type="synonym">Aranea singoriensis</name>
    <dbReference type="NCBI Taxonomy" id="434756"/>
    <lineage>
        <taxon>Eukaryota</taxon>
        <taxon>Metazoa</taxon>
        <taxon>Ecdysozoa</taxon>
        <taxon>Arthropoda</taxon>
        <taxon>Chelicerata</taxon>
        <taxon>Arachnida</taxon>
        <taxon>Araneae</taxon>
        <taxon>Araneomorphae</taxon>
        <taxon>Entelegynae</taxon>
        <taxon>Lycosoidea</taxon>
        <taxon>Lycosidae</taxon>
        <taxon>Lycosa</taxon>
    </lineage>
</organism>
<dbReference type="EMBL" id="EU926126">
    <property type="protein sequence ID" value="ACI41458.1"/>
    <property type="molecule type" value="mRNA"/>
</dbReference>
<dbReference type="EMBL" id="FM864130">
    <property type="protein sequence ID" value="CAS03727.1"/>
    <property type="molecule type" value="mRNA"/>
</dbReference>
<dbReference type="SMR" id="B6DD42"/>
<dbReference type="ArachnoServer" id="AS001069">
    <property type="toxin name" value="U15-lycotoxin-Ls1d"/>
</dbReference>
<dbReference type="GO" id="GO:0005576">
    <property type="term" value="C:extracellular region"/>
    <property type="evidence" value="ECO:0007669"/>
    <property type="project" value="UniProtKB-SubCell"/>
</dbReference>
<dbReference type="GO" id="GO:0090729">
    <property type="term" value="F:toxin activity"/>
    <property type="evidence" value="ECO:0007669"/>
    <property type="project" value="UniProtKB-KW"/>
</dbReference>
<dbReference type="GO" id="GO:0042742">
    <property type="term" value="P:defense response to bacterium"/>
    <property type="evidence" value="ECO:0007669"/>
    <property type="project" value="UniProtKB-KW"/>
</dbReference>
<dbReference type="InterPro" id="IPR036645">
    <property type="entry name" value="Elafin-like_sf"/>
</dbReference>
<dbReference type="SUPFAM" id="SSF57256">
    <property type="entry name" value="Elafin-like"/>
    <property type="match status" value="1"/>
</dbReference>
<protein>
    <recommendedName>
        <fullName>U15-lycotoxin-Ls1d</fullName>
    </recommendedName>
    <alternativeName>
        <fullName>Toxin-like structure LSTX-N9</fullName>
    </alternativeName>
</protein>
<proteinExistence type="evidence at transcript level"/>
<keyword id="KW-0044">Antibiotic</keyword>
<keyword id="KW-0929">Antimicrobial</keyword>
<keyword id="KW-1015">Disulfide bond</keyword>
<keyword id="KW-0964">Secreted</keyword>
<keyword id="KW-0732">Signal</keyword>
<keyword id="KW-0800">Toxin</keyword>
<sequence>MNSKIFAVLFLLAFLSCVLSDQYCPKSSITACKKMNIRNDCCKDDDCTGGSWCCATPCGNFCKYPTDRPGGKRAAGGKSCKTGYVY</sequence>